<accession>A0M287</accession>
<protein>
    <recommendedName>
        <fullName evidence="1">Histidinol-phosphate aminotransferase</fullName>
        <ecNumber evidence="1">2.6.1.9</ecNumber>
    </recommendedName>
    <alternativeName>
        <fullName evidence="1">Imidazole acetol-phosphate transaminase</fullName>
    </alternativeName>
</protein>
<feature type="chain" id="PRO_0000319760" description="Histidinol-phosphate aminotransferase">
    <location>
        <begin position="1"/>
        <end position="350"/>
    </location>
</feature>
<feature type="modified residue" description="N6-(pyridoxal phosphate)lysine" evidence="1">
    <location>
        <position position="209"/>
    </location>
</feature>
<gene>
    <name evidence="1" type="primary">hisC</name>
    <name type="ordered locus">GFO_1762</name>
</gene>
<keyword id="KW-0028">Amino-acid biosynthesis</keyword>
<keyword id="KW-0032">Aminotransferase</keyword>
<keyword id="KW-0368">Histidine biosynthesis</keyword>
<keyword id="KW-0663">Pyridoxal phosphate</keyword>
<keyword id="KW-0808">Transferase</keyword>
<organism>
    <name type="scientific">Christiangramia forsetii (strain DSM 17595 / CGMCC 1.15422 / KT0803)</name>
    <name type="common">Gramella forsetii</name>
    <dbReference type="NCBI Taxonomy" id="411154"/>
    <lineage>
        <taxon>Bacteria</taxon>
        <taxon>Pseudomonadati</taxon>
        <taxon>Bacteroidota</taxon>
        <taxon>Flavobacteriia</taxon>
        <taxon>Flavobacteriales</taxon>
        <taxon>Flavobacteriaceae</taxon>
        <taxon>Christiangramia</taxon>
    </lineage>
</organism>
<proteinExistence type="inferred from homology"/>
<dbReference type="EC" id="2.6.1.9" evidence="1"/>
<dbReference type="EMBL" id="CU207366">
    <property type="protein sequence ID" value="CAL66732.1"/>
    <property type="molecule type" value="Genomic_DNA"/>
</dbReference>
<dbReference type="RefSeq" id="WP_011709640.1">
    <property type="nucleotide sequence ID" value="NC_008571.1"/>
</dbReference>
<dbReference type="SMR" id="A0M287"/>
<dbReference type="STRING" id="411154.GFO_1762"/>
<dbReference type="KEGG" id="gfo:GFO_1762"/>
<dbReference type="eggNOG" id="COG0079">
    <property type="taxonomic scope" value="Bacteria"/>
</dbReference>
<dbReference type="HOGENOM" id="CLU_017584_3_1_10"/>
<dbReference type="OrthoDB" id="9813612at2"/>
<dbReference type="UniPathway" id="UPA00031">
    <property type="reaction ID" value="UER00012"/>
</dbReference>
<dbReference type="Proteomes" id="UP000000755">
    <property type="component" value="Chromosome"/>
</dbReference>
<dbReference type="GO" id="GO:0004400">
    <property type="term" value="F:histidinol-phosphate transaminase activity"/>
    <property type="evidence" value="ECO:0007669"/>
    <property type="project" value="UniProtKB-UniRule"/>
</dbReference>
<dbReference type="GO" id="GO:0030170">
    <property type="term" value="F:pyridoxal phosphate binding"/>
    <property type="evidence" value="ECO:0007669"/>
    <property type="project" value="InterPro"/>
</dbReference>
<dbReference type="GO" id="GO:0000105">
    <property type="term" value="P:L-histidine biosynthetic process"/>
    <property type="evidence" value="ECO:0007669"/>
    <property type="project" value="UniProtKB-UniRule"/>
</dbReference>
<dbReference type="CDD" id="cd00609">
    <property type="entry name" value="AAT_like"/>
    <property type="match status" value="1"/>
</dbReference>
<dbReference type="Gene3D" id="3.90.1150.10">
    <property type="entry name" value="Aspartate Aminotransferase, domain 1"/>
    <property type="match status" value="1"/>
</dbReference>
<dbReference type="Gene3D" id="3.40.640.10">
    <property type="entry name" value="Type I PLP-dependent aspartate aminotransferase-like (Major domain)"/>
    <property type="match status" value="1"/>
</dbReference>
<dbReference type="HAMAP" id="MF_01023">
    <property type="entry name" value="HisC_aminotrans_2"/>
    <property type="match status" value="1"/>
</dbReference>
<dbReference type="InterPro" id="IPR004839">
    <property type="entry name" value="Aminotransferase_I/II_large"/>
</dbReference>
<dbReference type="InterPro" id="IPR005861">
    <property type="entry name" value="HisP_aminotrans"/>
</dbReference>
<dbReference type="InterPro" id="IPR015424">
    <property type="entry name" value="PyrdxlP-dep_Trfase"/>
</dbReference>
<dbReference type="InterPro" id="IPR015421">
    <property type="entry name" value="PyrdxlP-dep_Trfase_major"/>
</dbReference>
<dbReference type="InterPro" id="IPR015422">
    <property type="entry name" value="PyrdxlP-dep_Trfase_small"/>
</dbReference>
<dbReference type="NCBIfam" id="TIGR01141">
    <property type="entry name" value="hisC"/>
    <property type="match status" value="1"/>
</dbReference>
<dbReference type="PANTHER" id="PTHR42885:SF2">
    <property type="entry name" value="HISTIDINOL-PHOSPHATE AMINOTRANSFERASE"/>
    <property type="match status" value="1"/>
</dbReference>
<dbReference type="PANTHER" id="PTHR42885">
    <property type="entry name" value="HISTIDINOL-PHOSPHATE AMINOTRANSFERASE-RELATED"/>
    <property type="match status" value="1"/>
</dbReference>
<dbReference type="Pfam" id="PF00155">
    <property type="entry name" value="Aminotran_1_2"/>
    <property type="match status" value="1"/>
</dbReference>
<dbReference type="SUPFAM" id="SSF53383">
    <property type="entry name" value="PLP-dependent transferases"/>
    <property type="match status" value="1"/>
</dbReference>
<name>HIS8_CHRFK</name>
<sequence length="350" mass="39955">MKDFNINKLVRPNVAGLKPYSSARDEFKTQGAEMVFLDANENPNDNGLNRYPDPQQTSVKEKLSETRGVSPNNILLGNGSDEVLDLIFRAFCEPGKDNVITLPPTYGMYKVLSDINNIENREVLLNHDFEPDLTAIFKQITKDTKIIFLCSPNNPSGNSFEAEKIEMILEKFNGLVVIDEAYIDFSDSKSWIHRLEDFPNLIVTQTFSKAFGRAGIRLGVLYSSDEIIAILNKIKPPYNVNQLTQKESLKILFNLDSIKLQVAEIKNERTILSKQLLEVNFVSKIYRSDANFLLIEVDHANKRYDQFLEKGIVIRNRSNQPLCENCLRITIGTKEENKKLIKAFKELENE</sequence>
<evidence type="ECO:0000255" key="1">
    <source>
        <dbReference type="HAMAP-Rule" id="MF_01023"/>
    </source>
</evidence>
<reference key="1">
    <citation type="journal article" date="2006" name="Environ. Microbiol.">
        <title>Whole genome analysis of the marine Bacteroidetes'Gramella forsetii' reveals adaptations to degradation of polymeric organic matter.</title>
        <authorList>
            <person name="Bauer M."/>
            <person name="Kube M."/>
            <person name="Teeling H."/>
            <person name="Richter M."/>
            <person name="Lombardot T."/>
            <person name="Allers E."/>
            <person name="Wuerdemann C.A."/>
            <person name="Quast C."/>
            <person name="Kuhl H."/>
            <person name="Knaust F."/>
            <person name="Woebken D."/>
            <person name="Bischof K."/>
            <person name="Mussmann M."/>
            <person name="Choudhuri J.V."/>
            <person name="Meyer F."/>
            <person name="Reinhardt R."/>
            <person name="Amann R.I."/>
            <person name="Gloeckner F.O."/>
        </authorList>
    </citation>
    <scope>NUCLEOTIDE SEQUENCE [LARGE SCALE GENOMIC DNA]</scope>
    <source>
        <strain>DSM 17595 / CGMCC 1.15422 / KT0803</strain>
    </source>
</reference>
<comment type="catalytic activity">
    <reaction evidence="1">
        <text>L-histidinol phosphate + 2-oxoglutarate = 3-(imidazol-4-yl)-2-oxopropyl phosphate + L-glutamate</text>
        <dbReference type="Rhea" id="RHEA:23744"/>
        <dbReference type="ChEBI" id="CHEBI:16810"/>
        <dbReference type="ChEBI" id="CHEBI:29985"/>
        <dbReference type="ChEBI" id="CHEBI:57766"/>
        <dbReference type="ChEBI" id="CHEBI:57980"/>
        <dbReference type="EC" id="2.6.1.9"/>
    </reaction>
</comment>
<comment type="cofactor">
    <cofactor evidence="1">
        <name>pyridoxal 5'-phosphate</name>
        <dbReference type="ChEBI" id="CHEBI:597326"/>
    </cofactor>
</comment>
<comment type="pathway">
    <text evidence="1">Amino-acid biosynthesis; L-histidine biosynthesis; L-histidine from 5-phospho-alpha-D-ribose 1-diphosphate: step 7/9.</text>
</comment>
<comment type="subunit">
    <text evidence="1">Homodimer.</text>
</comment>
<comment type="similarity">
    <text evidence="1">Belongs to the class-II pyridoxal-phosphate-dependent aminotransferase family. Histidinol-phosphate aminotransferase subfamily.</text>
</comment>